<sequence>MAKVYKDLREFLEVLEQEGQLIRVKEEVNPEPDIAAAGRAAANLGKNQPAVFFEKIKGYKYSVVTNVHGSWQNHALMLGLDKNTSTKDQFYELNRRWDKFPVPPNVVKREAAPCKENVIDKDINLFEILPLYRINEQDGGFYISKASVVTADPEYPDDFNKLNVGTYRIQVKDRDRVGIQALAMHDIAVQLEKAEAENKPLPIAITIGNNPLVTFMASTPVGYNQNEYEFVGALQDGVPMDIVKSDLYDHLYVPAGSEVVLEGHIIPRVRTVEGPFGEFPGSYSGARLQCEVKIDRITHRTNPIFENLYLGIPWTEIDYLMALNTSVPLYKQLKETMPEVVAVNAMYTHGIGVIISTKVRYGGYAKGVAFRLLSTPHGMPYSKIVIVVDEFVDPFNLEQVMWALTTRVHPGKDVSIIENCPGMPLDPSTNPPGMHTKMIIDATTPVPPEPNPRETQLLDPPDGTEEWEEKLKELLKNQNR</sequence>
<reference key="1">
    <citation type="journal article" date="1999" name="J. Bacteriol.">
        <title>Cloning, characterization, and expression of a novel gene encoding a reversible 4-hydroxybenzoate decarboxylase from Clostridium hydroxybenzoicum.</title>
        <authorList>
            <person name="Huang J."/>
            <person name="He Z."/>
            <person name="Wiegel J."/>
        </authorList>
    </citation>
    <scope>NUCLEOTIDE SEQUENCE [GENOMIC DNA]</scope>
    <scope>PROTEIN SEQUENCE OF 61-82; 245-268 AND 384-407</scope>
    <scope>FUNCTION</scope>
    <scope>CATALYTIC ACTIVITY</scope>
    <scope>SUBSTRATE SPECIFICITY</scope>
    <source>
        <strain>ATCC 51151 / DSM 7310 / JW/Z-1</strain>
    </source>
</reference>
<reference key="2">
    <citation type="journal article" date="1995" name="Eur. J. Biochem.">
        <title>Purification and characterization of an oxygen-sensitive reversible 4-hydroxybenzoate decarboxylase from Clostridium hydroxybenzoicum.</title>
        <authorList>
            <person name="He Z."/>
            <person name="Wiegel J."/>
        </authorList>
    </citation>
    <scope>PROTEIN SEQUENCE OF 1-22</scope>
    <scope>FUNCTION</scope>
    <scope>CATALYTIC ACTIVITY</scope>
    <scope>BIOPHYSICOCHEMICAL PROPERTIES</scope>
    <scope>ACTIVITY REGULATION</scope>
    <scope>SUBSTRATE SPECIFICITY</scope>
    <scope>SUBUNIT</scope>
    <source>
        <strain>ATCC 51151 / DSM 7310 / JW/Z-1</strain>
    </source>
</reference>
<reference key="3">
    <citation type="journal article" date="1990" name="Microb. Ecol.">
        <title>Isolation and partial characterization of a Clostridium species transforming para-hydroxybenzoate and 3,4-dihydroxybenzoate and producing phenols as the final transformation products.</title>
        <authorList>
            <person name="Zhang X."/>
            <person name="Wiegel J."/>
        </authorList>
    </citation>
    <scope>FUNCTION</scope>
    <scope>INDUCTION</scope>
    <source>
        <strain>ATCC 51151 / DSM 7310 / JW/Z-1</strain>
    </source>
</reference>
<reference key="4">
    <citation type="journal article" date="2005" name="Genomics">
        <title>Distribution of genes encoding the microbial non-oxidative reversible hydroxyarylic acid decarboxylases/phenol carboxylases.</title>
        <authorList>
            <person name="Lupa B."/>
            <person name="Lyon D."/>
            <person name="Gibbs M.D."/>
            <person name="Reeves R.A."/>
            <person name="Wiegel J."/>
        </authorList>
    </citation>
    <scope>FUNCTION</scope>
    <scope>CATALYTIC ACTIVITY</scope>
    <source>
        <strain>ATCC 51151 / DSM 7310 / JW/Z-1</strain>
    </source>
</reference>
<accession>Q9S4M7</accession>
<feature type="chain" id="PRO_0000434526" description="Phenolic acid decarboxylase">
    <location>
        <begin position="1"/>
        <end position="480"/>
    </location>
</feature>
<feature type="region of interest" description="Disordered" evidence="2">
    <location>
        <begin position="443"/>
        <end position="466"/>
    </location>
</feature>
<feature type="active site" description="Proton donor" evidence="1">
    <location>
        <position position="278"/>
    </location>
</feature>
<feature type="binding site" evidence="1">
    <location>
        <begin position="163"/>
        <end position="168"/>
    </location>
    <ligand>
        <name>prenylated FMN</name>
        <dbReference type="ChEBI" id="CHEBI:87746"/>
    </ligand>
</feature>
<feature type="binding site" evidence="1">
    <location>
        <position position="163"/>
    </location>
    <ligand>
        <name>Mn(2+)</name>
        <dbReference type="ChEBI" id="CHEBI:29035"/>
    </ligand>
</feature>
<feature type="binding site" evidence="1">
    <location>
        <begin position="184"/>
        <end position="185"/>
    </location>
    <ligand>
        <name>prenylated FMN</name>
        <dbReference type="ChEBI" id="CHEBI:87746"/>
    </ligand>
</feature>
<feature type="binding site" evidence="1">
    <location>
        <position position="185"/>
    </location>
    <ligand>
        <name>Mn(2+)</name>
        <dbReference type="ChEBI" id="CHEBI:29035"/>
    </ligand>
</feature>
<feature type="binding site" evidence="1">
    <location>
        <position position="227"/>
    </location>
    <ligand>
        <name>Mn(2+)</name>
        <dbReference type="ChEBI" id="CHEBI:29035"/>
    </ligand>
</feature>
<feature type="sequence conflict" description="In Ref. 2; AA sequence." evidence="10" ref="2">
    <original>K</original>
    <variation>R</variation>
    <location>
        <position position="6"/>
    </location>
</feature>
<feature type="helix" evidence="14">
    <location>
        <begin position="8"/>
        <end position="17"/>
    </location>
</feature>
<feature type="strand" evidence="14">
    <location>
        <begin position="21"/>
        <end position="24"/>
    </location>
</feature>
<feature type="turn" evidence="14">
    <location>
        <begin position="30"/>
        <end position="32"/>
    </location>
</feature>
<feature type="helix" evidence="14">
    <location>
        <begin position="33"/>
        <end position="43"/>
    </location>
</feature>
<feature type="strand" evidence="14">
    <location>
        <begin position="50"/>
        <end position="54"/>
    </location>
</feature>
<feature type="strand" evidence="14">
    <location>
        <begin position="60"/>
        <end position="65"/>
    </location>
</feature>
<feature type="helix" evidence="14">
    <location>
        <begin position="71"/>
        <end position="77"/>
    </location>
</feature>
<feature type="helix" evidence="14">
    <location>
        <begin position="86"/>
        <end position="97"/>
    </location>
</feature>
<feature type="helix" evidence="14">
    <location>
        <begin position="109"/>
        <end position="111"/>
    </location>
</feature>
<feature type="helix" evidence="14">
    <location>
        <begin position="113"/>
        <end position="115"/>
    </location>
</feature>
<feature type="strand" evidence="14">
    <location>
        <begin position="116"/>
        <end position="119"/>
    </location>
</feature>
<feature type="helix" evidence="14">
    <location>
        <begin position="125"/>
        <end position="127"/>
    </location>
</feature>
<feature type="strand" evidence="14">
    <location>
        <begin position="147"/>
        <end position="150"/>
    </location>
</feature>
<feature type="strand" evidence="14">
    <location>
        <begin position="163"/>
        <end position="165"/>
    </location>
</feature>
<feature type="strand" evidence="14">
    <location>
        <begin position="169"/>
        <end position="173"/>
    </location>
</feature>
<feature type="strand" evidence="14">
    <location>
        <begin position="176"/>
        <end position="179"/>
    </location>
</feature>
<feature type="helix" evidence="15">
    <location>
        <begin position="181"/>
        <end position="183"/>
    </location>
</feature>
<feature type="helix" evidence="14">
    <location>
        <begin position="188"/>
        <end position="196"/>
    </location>
</feature>
<feature type="strand" evidence="14">
    <location>
        <begin position="201"/>
        <end position="208"/>
    </location>
</feature>
<feature type="helix" evidence="14">
    <location>
        <begin position="211"/>
        <end position="217"/>
    </location>
</feature>
<feature type="helix" evidence="14">
    <location>
        <begin position="227"/>
        <end position="234"/>
    </location>
</feature>
<feature type="turn" evidence="15">
    <location>
        <begin position="235"/>
        <end position="237"/>
    </location>
</feature>
<feature type="strand" evidence="14">
    <location>
        <begin position="241"/>
        <end position="244"/>
    </location>
</feature>
<feature type="strand" evidence="14">
    <location>
        <begin position="252"/>
        <end position="254"/>
    </location>
</feature>
<feature type="strand" evidence="14">
    <location>
        <begin position="258"/>
        <end position="265"/>
    </location>
</feature>
<feature type="strand" evidence="14">
    <location>
        <begin position="271"/>
        <end position="273"/>
    </location>
</feature>
<feature type="strand" evidence="14">
    <location>
        <begin position="281"/>
        <end position="283"/>
    </location>
</feature>
<feature type="strand" evidence="14">
    <location>
        <begin position="287"/>
        <end position="299"/>
    </location>
</feature>
<feature type="strand" evidence="14">
    <location>
        <begin position="304"/>
        <end position="306"/>
    </location>
</feature>
<feature type="strand" evidence="14">
    <location>
        <begin position="312"/>
        <end position="315"/>
    </location>
</feature>
<feature type="helix" evidence="14">
    <location>
        <begin position="316"/>
        <end position="319"/>
    </location>
</feature>
<feature type="helix" evidence="14">
    <location>
        <begin position="323"/>
        <end position="336"/>
    </location>
</feature>
<feature type="strand" evidence="14">
    <location>
        <begin position="340"/>
        <end position="347"/>
    </location>
</feature>
<feature type="turn" evidence="14">
    <location>
        <begin position="348"/>
        <end position="351"/>
    </location>
</feature>
<feature type="strand" evidence="14">
    <location>
        <begin position="352"/>
        <end position="357"/>
    </location>
</feature>
<feature type="helix" evidence="14">
    <location>
        <begin position="364"/>
        <end position="372"/>
    </location>
</feature>
<feature type="helix" evidence="14">
    <location>
        <begin position="378"/>
        <end position="381"/>
    </location>
</feature>
<feature type="strand" evidence="14">
    <location>
        <begin position="384"/>
        <end position="388"/>
    </location>
</feature>
<feature type="helix" evidence="14">
    <location>
        <begin position="397"/>
        <end position="407"/>
    </location>
</feature>
<feature type="turn" evidence="14">
    <location>
        <begin position="410"/>
        <end position="412"/>
    </location>
</feature>
<feature type="strand" evidence="14">
    <location>
        <begin position="413"/>
        <end position="421"/>
    </location>
</feature>
<feature type="strand" evidence="14">
    <location>
        <begin position="434"/>
        <end position="443"/>
    </location>
</feature>
<feature type="helix" evidence="14">
    <location>
        <begin position="464"/>
        <end position="475"/>
    </location>
</feature>
<keyword id="KW-0002">3D-structure</keyword>
<keyword id="KW-0058">Aromatic hydrocarbons catabolism</keyword>
<keyword id="KW-0210">Decarboxylase</keyword>
<keyword id="KW-0216">Detoxification</keyword>
<keyword id="KW-0903">Direct protein sequencing</keyword>
<keyword id="KW-0285">Flavoprotein</keyword>
<keyword id="KW-0288">FMN</keyword>
<keyword id="KW-0456">Lyase</keyword>
<keyword id="KW-0464">Manganese</keyword>
<keyword id="KW-0479">Metal-binding</keyword>
<name>YCLC_SEDHY</name>
<dbReference type="EC" id="4.1.1.63" evidence="6 11"/>
<dbReference type="EC" id="4.1.1.61" evidence="6 11 12"/>
<dbReference type="EMBL" id="AF128880">
    <property type="protein sequence ID" value="AAD50377.1"/>
    <property type="molecule type" value="Genomic_DNA"/>
</dbReference>
<dbReference type="PDB" id="7AE4">
    <property type="method" value="X-ray"/>
    <property type="resolution" value="3.31 A"/>
    <property type="chains" value="A/B/C/D/E/F=1-480"/>
</dbReference>
<dbReference type="PDB" id="7AE5">
    <property type="method" value="X-ray"/>
    <property type="resolution" value="2.19 A"/>
    <property type="chains" value="A/B/C/D/E/F=1-480"/>
</dbReference>
<dbReference type="PDB" id="7AE7">
    <property type="method" value="X-ray"/>
    <property type="resolution" value="2.66 A"/>
    <property type="chains" value="A/B/C/D/E/F=1-480"/>
</dbReference>
<dbReference type="PDBsum" id="7AE4"/>
<dbReference type="PDBsum" id="7AE5"/>
<dbReference type="PDBsum" id="7AE7"/>
<dbReference type="SMR" id="Q9S4M7"/>
<dbReference type="BRENDA" id="4.1.1.61">
    <property type="organism ID" value="5658"/>
</dbReference>
<dbReference type="GO" id="GO:0005829">
    <property type="term" value="C:cytosol"/>
    <property type="evidence" value="ECO:0007669"/>
    <property type="project" value="TreeGrafter"/>
</dbReference>
<dbReference type="GO" id="GO:0008694">
    <property type="term" value="F:3-octaprenyl-4-hydroxybenzoate carboxy-lyase activity"/>
    <property type="evidence" value="ECO:0007669"/>
    <property type="project" value="TreeGrafter"/>
</dbReference>
<dbReference type="GO" id="GO:0018799">
    <property type="term" value="F:4-hydroxybenzoate decarboxylase activity"/>
    <property type="evidence" value="ECO:0007669"/>
    <property type="project" value="UniProtKB-EC"/>
</dbReference>
<dbReference type="GO" id="GO:0046872">
    <property type="term" value="F:metal ion binding"/>
    <property type="evidence" value="ECO:0007669"/>
    <property type="project" value="UniProtKB-KW"/>
</dbReference>
<dbReference type="GO" id="GO:0050223">
    <property type="term" value="F:protocatechuate decarboxylase activity"/>
    <property type="evidence" value="ECO:0007669"/>
    <property type="project" value="UniProtKB-EC"/>
</dbReference>
<dbReference type="GO" id="GO:0009056">
    <property type="term" value="P:catabolic process"/>
    <property type="evidence" value="ECO:0007669"/>
    <property type="project" value="UniProtKB-KW"/>
</dbReference>
<dbReference type="GO" id="GO:0009636">
    <property type="term" value="P:response to toxic substance"/>
    <property type="evidence" value="ECO:0007669"/>
    <property type="project" value="UniProtKB-KW"/>
</dbReference>
<dbReference type="GO" id="GO:0006744">
    <property type="term" value="P:ubiquinone biosynthetic process"/>
    <property type="evidence" value="ECO:0007669"/>
    <property type="project" value="TreeGrafter"/>
</dbReference>
<dbReference type="FunFam" id="3.40.1670.10:FF:000003">
    <property type="entry name" value="Phenolic acid decarboxylase"/>
    <property type="match status" value="1"/>
</dbReference>
<dbReference type="Gene3D" id="3.40.1670.10">
    <property type="entry name" value="UbiD C-terminal domain-like"/>
    <property type="match status" value="1"/>
</dbReference>
<dbReference type="HAMAP" id="MF_01985">
    <property type="entry name" value="UbiD_YclC"/>
    <property type="match status" value="1"/>
</dbReference>
<dbReference type="InterPro" id="IPR032902">
    <property type="entry name" value="BsdC"/>
</dbReference>
<dbReference type="InterPro" id="IPR053417">
    <property type="entry name" value="PAD_UbiD-like"/>
</dbReference>
<dbReference type="InterPro" id="IPR002830">
    <property type="entry name" value="UbiD"/>
</dbReference>
<dbReference type="InterPro" id="IPR049381">
    <property type="entry name" value="UbiD-like_C"/>
</dbReference>
<dbReference type="InterPro" id="IPR049383">
    <property type="entry name" value="UbiD-like_N"/>
</dbReference>
<dbReference type="InterPro" id="IPR048304">
    <property type="entry name" value="UbiD_Rift_dom"/>
</dbReference>
<dbReference type="NCBIfam" id="TIGR00148">
    <property type="entry name" value="UbiD family decarboxylase"/>
    <property type="match status" value="1"/>
</dbReference>
<dbReference type="NCBIfam" id="NF041204">
    <property type="entry name" value="VdcC"/>
    <property type="match status" value="1"/>
</dbReference>
<dbReference type="PANTHER" id="PTHR30108">
    <property type="entry name" value="3-OCTAPRENYL-4-HYDROXYBENZOATE CARBOXY-LYASE-RELATED"/>
    <property type="match status" value="1"/>
</dbReference>
<dbReference type="PANTHER" id="PTHR30108:SF17">
    <property type="entry name" value="FERULIC ACID DECARBOXYLASE 1"/>
    <property type="match status" value="1"/>
</dbReference>
<dbReference type="Pfam" id="PF01977">
    <property type="entry name" value="UbiD"/>
    <property type="match status" value="1"/>
</dbReference>
<dbReference type="Pfam" id="PF20696">
    <property type="entry name" value="UbiD_C"/>
    <property type="match status" value="1"/>
</dbReference>
<dbReference type="Pfam" id="PF20695">
    <property type="entry name" value="UbiD_N"/>
    <property type="match status" value="1"/>
</dbReference>
<dbReference type="SUPFAM" id="SSF50475">
    <property type="entry name" value="FMN-binding split barrel"/>
    <property type="match status" value="1"/>
</dbReference>
<dbReference type="SUPFAM" id="SSF143968">
    <property type="entry name" value="UbiD C-terminal domain-like"/>
    <property type="match status" value="1"/>
</dbReference>
<comment type="function">
    <text evidence="3 4 5 6">Involved in the non-oxidative decarboxylation and detoxification of phenolic derivatives under anaerobic conditions (PubMed:10438791, PubMed:15979273, PubMed:24193968, PubMed:7744052). Oxygen-sensitive phenolic acid decarboxylase that catalyzes the reversible decarboxylation of 4-hydroxybenzoate and 3,4-dihydroxybenzoate (PubMed:10438791, PubMed:15979273, PubMed:7744052).</text>
</comment>
<comment type="catalytic activity">
    <reaction evidence="6 11 12">
        <text>4-hydroxybenzoate + H(+) = phenol + CO2</text>
        <dbReference type="Rhea" id="RHEA:10876"/>
        <dbReference type="ChEBI" id="CHEBI:15378"/>
        <dbReference type="ChEBI" id="CHEBI:15882"/>
        <dbReference type="ChEBI" id="CHEBI:16526"/>
        <dbReference type="ChEBI" id="CHEBI:17879"/>
        <dbReference type="EC" id="4.1.1.61"/>
    </reaction>
</comment>
<comment type="catalytic activity">
    <reaction evidence="6 11">
        <text>3,4-dihydroxybenzoate + H(+) = catechol + CO2</text>
        <dbReference type="Rhea" id="RHEA:22416"/>
        <dbReference type="ChEBI" id="CHEBI:15378"/>
        <dbReference type="ChEBI" id="CHEBI:16526"/>
        <dbReference type="ChEBI" id="CHEBI:18135"/>
        <dbReference type="ChEBI" id="CHEBI:36241"/>
        <dbReference type="EC" id="4.1.1.63"/>
    </reaction>
</comment>
<comment type="cofactor">
    <cofactor evidence="1">
        <name>prenylated FMN</name>
        <dbReference type="ChEBI" id="CHEBI:87746"/>
    </cofactor>
    <text evidence="1">Binds 1 prenylated FMN per subunit.</text>
</comment>
<comment type="cofactor">
    <cofactor evidence="1">
        <name>Mn(2+)</name>
        <dbReference type="ChEBI" id="CHEBI:29035"/>
    </cofactor>
</comment>
<comment type="activity regulation">
    <text evidence="6">Inhibited by Zn(2+), (2,3,4)-trihydroxybenzoate and (3,4,5)-trihydroxybenzoate (PubMed:7744052). Ammonium and rubidium ions decrease the activity of the carboxylation of 3,4-dihydroxybenzoate by about 20% (PubMed:7744052).</text>
</comment>
<comment type="biophysicochemical properties">
    <kinetics>
        <KM evidence="6">0.4 mM for 4-hydroxybenzoate</KM>
        <KM evidence="6">1.2 mM for 3,4-dihydroxybenzoate</KM>
        <text evidence="6">kcat is 3300 min(-1) with 4-hydroxybenzoate as substrate. kcat is 1100 min(-1) with 3,4-dihydroxybenzoate as substrate.</text>
    </kinetics>
    <phDependence>
        <text evidence="6">Optimum pH is between 5.6-6.2.</text>
    </phDependence>
    <temperatureDependence>
        <text evidence="6">Optimum temperature is 50 degrees Celsius.</text>
    </temperatureDependence>
</comment>
<comment type="subunit">
    <text evidence="6">Homohexamer.</text>
</comment>
<comment type="induction">
    <text evidence="13">By 4-hydroxybenzoate and 3,4-dihydroxybenzoate.</text>
</comment>
<comment type="miscellaneous">
    <text evidence="10">It is not known, if phenolic acid decarboxylase forms a complex composed of ShdB, ShdC and ShdD. The term subunit is often used in reference to the operon, however there is no experimental evidence to prove the existence of the complex.</text>
</comment>
<comment type="similarity">
    <text evidence="1">Belongs to the UbiD family. YclC subfamily.</text>
</comment>
<protein>
    <recommendedName>
        <fullName evidence="1 9">Phenolic acid decarboxylase</fullName>
        <shortName evidence="1 9">PAD</shortName>
    </recommendedName>
    <alternativeName>
        <fullName evidence="9">3,4-dihydroxybenzoate decarboxylase</fullName>
        <shortName evidence="9">3,4-dihydroxybenzoate DC</shortName>
        <ecNumber evidence="6 11">4.1.1.63</ecNumber>
    </alternativeName>
    <alternativeName>
        <fullName evidence="7">4-hydroxybenzoate decarboxylase</fullName>
        <shortName evidence="7">4-HOB-DC</shortName>
        <shortName evidence="9">4-hydroxybenzoate DC</shortName>
        <ecNumber evidence="6 11 12">4.1.1.61</ecNumber>
    </alternativeName>
    <alternativeName>
        <fullName evidence="9">Phenolic acid decarboxylase subunit C</fullName>
    </alternativeName>
</protein>
<gene>
    <name evidence="8" type="primary">shdC</name>
    <name evidence="7" type="synonym">ohb1</name>
</gene>
<evidence type="ECO:0000255" key="1">
    <source>
        <dbReference type="HAMAP-Rule" id="MF_01985"/>
    </source>
</evidence>
<evidence type="ECO:0000256" key="2">
    <source>
        <dbReference type="SAM" id="MobiDB-lite"/>
    </source>
</evidence>
<evidence type="ECO:0000269" key="3">
    <source>
    </source>
</evidence>
<evidence type="ECO:0000269" key="4">
    <source>
    </source>
</evidence>
<evidence type="ECO:0000269" key="5">
    <source>
    </source>
</evidence>
<evidence type="ECO:0000269" key="6">
    <source>
    </source>
</evidence>
<evidence type="ECO:0000303" key="7">
    <source>
    </source>
</evidence>
<evidence type="ECO:0000303" key="8">
    <source>
    </source>
</evidence>
<evidence type="ECO:0000303" key="9">
    <source>
    </source>
</evidence>
<evidence type="ECO:0000305" key="10"/>
<evidence type="ECO:0000305" key="11">
    <source>
    </source>
</evidence>
<evidence type="ECO:0000305" key="12">
    <source>
    </source>
</evidence>
<evidence type="ECO:0000305" key="13">
    <source>
    </source>
</evidence>
<evidence type="ECO:0007829" key="14">
    <source>
        <dbReference type="PDB" id="7AE5"/>
    </source>
</evidence>
<evidence type="ECO:0007829" key="15">
    <source>
        <dbReference type="PDB" id="7AE7"/>
    </source>
</evidence>
<organism>
    <name type="scientific">Sedimentibacter hydroxybenzoicus</name>
    <name type="common">Clostridium hydroxybenzoicum</name>
    <dbReference type="NCBI Taxonomy" id="29345"/>
    <lineage>
        <taxon>Bacteria</taxon>
        <taxon>Bacillati</taxon>
        <taxon>Bacillota</taxon>
        <taxon>Tissierellia</taxon>
        <taxon>Sedimentibacter</taxon>
    </lineage>
</organism>
<proteinExistence type="evidence at protein level"/>